<comment type="function">
    <text evidence="1">This enzyme is involved in nucleotide metabolism: it produces dUMP, the immediate precursor of thymidine nucleotides and it decreases the intracellular concentration of dUTP so that uracil cannot be incorporated into DNA.</text>
</comment>
<comment type="catalytic activity">
    <reaction evidence="1">
        <text>dUTP + H2O = dUMP + diphosphate + H(+)</text>
        <dbReference type="Rhea" id="RHEA:10248"/>
        <dbReference type="ChEBI" id="CHEBI:15377"/>
        <dbReference type="ChEBI" id="CHEBI:15378"/>
        <dbReference type="ChEBI" id="CHEBI:33019"/>
        <dbReference type="ChEBI" id="CHEBI:61555"/>
        <dbReference type="ChEBI" id="CHEBI:246422"/>
        <dbReference type="EC" id="3.6.1.23"/>
    </reaction>
</comment>
<comment type="cofactor">
    <cofactor evidence="1">
        <name>Mg(2+)</name>
        <dbReference type="ChEBI" id="CHEBI:18420"/>
    </cofactor>
</comment>
<comment type="pathway">
    <text evidence="1">Pyrimidine metabolism; dUMP biosynthesis; dUMP from dCTP (dUTP route): step 2/2.</text>
</comment>
<comment type="similarity">
    <text evidence="1">Belongs to the dUTPase family.</text>
</comment>
<keyword id="KW-0378">Hydrolase</keyword>
<keyword id="KW-0460">Magnesium</keyword>
<keyword id="KW-0479">Metal-binding</keyword>
<keyword id="KW-0546">Nucleotide metabolism</keyword>
<keyword id="KW-1185">Reference proteome</keyword>
<feature type="chain" id="PRO_1000094957" description="Deoxyuridine 5'-triphosphate nucleotidohydrolase">
    <location>
        <begin position="1"/>
        <end position="155"/>
    </location>
</feature>
<feature type="binding site" evidence="1">
    <location>
        <begin position="74"/>
        <end position="76"/>
    </location>
    <ligand>
        <name>substrate</name>
    </ligand>
</feature>
<feature type="binding site" evidence="1">
    <location>
        <position position="87"/>
    </location>
    <ligand>
        <name>substrate</name>
    </ligand>
</feature>
<feature type="binding site" evidence="1">
    <location>
        <begin position="91"/>
        <end position="93"/>
    </location>
    <ligand>
        <name>substrate</name>
    </ligand>
</feature>
<dbReference type="EC" id="3.6.1.23" evidence="1"/>
<dbReference type="EMBL" id="CP000830">
    <property type="protein sequence ID" value="ABV94708.1"/>
    <property type="molecule type" value="Genomic_DNA"/>
</dbReference>
<dbReference type="RefSeq" id="WP_012179636.1">
    <property type="nucleotide sequence ID" value="NC_009952.1"/>
</dbReference>
<dbReference type="SMR" id="A8LKC5"/>
<dbReference type="STRING" id="398580.Dshi_2975"/>
<dbReference type="KEGG" id="dsh:Dshi_2975"/>
<dbReference type="eggNOG" id="COG0756">
    <property type="taxonomic scope" value="Bacteria"/>
</dbReference>
<dbReference type="HOGENOM" id="CLU_068508_1_2_5"/>
<dbReference type="OrthoDB" id="9809956at2"/>
<dbReference type="UniPathway" id="UPA00610">
    <property type="reaction ID" value="UER00666"/>
</dbReference>
<dbReference type="Proteomes" id="UP000006833">
    <property type="component" value="Chromosome"/>
</dbReference>
<dbReference type="GO" id="GO:0004170">
    <property type="term" value="F:dUTP diphosphatase activity"/>
    <property type="evidence" value="ECO:0007669"/>
    <property type="project" value="UniProtKB-UniRule"/>
</dbReference>
<dbReference type="GO" id="GO:0000287">
    <property type="term" value="F:magnesium ion binding"/>
    <property type="evidence" value="ECO:0007669"/>
    <property type="project" value="UniProtKB-UniRule"/>
</dbReference>
<dbReference type="GO" id="GO:0006226">
    <property type="term" value="P:dUMP biosynthetic process"/>
    <property type="evidence" value="ECO:0007669"/>
    <property type="project" value="UniProtKB-UniRule"/>
</dbReference>
<dbReference type="GO" id="GO:0046081">
    <property type="term" value="P:dUTP catabolic process"/>
    <property type="evidence" value="ECO:0007669"/>
    <property type="project" value="InterPro"/>
</dbReference>
<dbReference type="CDD" id="cd07557">
    <property type="entry name" value="trimeric_dUTPase"/>
    <property type="match status" value="1"/>
</dbReference>
<dbReference type="Gene3D" id="2.70.40.10">
    <property type="match status" value="1"/>
</dbReference>
<dbReference type="HAMAP" id="MF_00116">
    <property type="entry name" value="dUTPase_bact"/>
    <property type="match status" value="1"/>
</dbReference>
<dbReference type="InterPro" id="IPR008181">
    <property type="entry name" value="dUTPase"/>
</dbReference>
<dbReference type="InterPro" id="IPR029054">
    <property type="entry name" value="dUTPase-like"/>
</dbReference>
<dbReference type="InterPro" id="IPR036157">
    <property type="entry name" value="dUTPase-like_sf"/>
</dbReference>
<dbReference type="InterPro" id="IPR033704">
    <property type="entry name" value="dUTPase_trimeric"/>
</dbReference>
<dbReference type="NCBIfam" id="TIGR00576">
    <property type="entry name" value="dut"/>
    <property type="match status" value="1"/>
</dbReference>
<dbReference type="NCBIfam" id="NF001862">
    <property type="entry name" value="PRK00601.1"/>
    <property type="match status" value="1"/>
</dbReference>
<dbReference type="PANTHER" id="PTHR11241">
    <property type="entry name" value="DEOXYURIDINE 5'-TRIPHOSPHATE NUCLEOTIDOHYDROLASE"/>
    <property type="match status" value="1"/>
</dbReference>
<dbReference type="PANTHER" id="PTHR11241:SF0">
    <property type="entry name" value="DEOXYURIDINE 5'-TRIPHOSPHATE NUCLEOTIDOHYDROLASE"/>
    <property type="match status" value="1"/>
</dbReference>
<dbReference type="Pfam" id="PF00692">
    <property type="entry name" value="dUTPase"/>
    <property type="match status" value="1"/>
</dbReference>
<dbReference type="SUPFAM" id="SSF51283">
    <property type="entry name" value="dUTPase-like"/>
    <property type="match status" value="1"/>
</dbReference>
<name>DUT_DINSH</name>
<sequence>MSLMIEVLREPWADEAIPLPSYATVGAAGADLRANLPPEIRDQGVEIQPLCRVIVPTGLRVAIPAGYEMQIRPRSGLALKHGLSLPNTPGTIDSDYRGPLGVLLTVIGTEAVTLHHGDRIAQAVIAPVVQAVFAPVDRLEETARGAGGFGSTGRG</sequence>
<reference key="1">
    <citation type="journal article" date="2010" name="ISME J.">
        <title>The complete genome sequence of the algal symbiont Dinoroseobacter shibae: a hitchhiker's guide to life in the sea.</title>
        <authorList>
            <person name="Wagner-Dobler I."/>
            <person name="Ballhausen B."/>
            <person name="Berger M."/>
            <person name="Brinkhoff T."/>
            <person name="Buchholz I."/>
            <person name="Bunk B."/>
            <person name="Cypionka H."/>
            <person name="Daniel R."/>
            <person name="Drepper T."/>
            <person name="Gerdts G."/>
            <person name="Hahnke S."/>
            <person name="Han C."/>
            <person name="Jahn D."/>
            <person name="Kalhoefer D."/>
            <person name="Kiss H."/>
            <person name="Klenk H.P."/>
            <person name="Kyrpides N."/>
            <person name="Liebl W."/>
            <person name="Liesegang H."/>
            <person name="Meincke L."/>
            <person name="Pati A."/>
            <person name="Petersen J."/>
            <person name="Piekarski T."/>
            <person name="Pommerenke C."/>
            <person name="Pradella S."/>
            <person name="Pukall R."/>
            <person name="Rabus R."/>
            <person name="Stackebrandt E."/>
            <person name="Thole S."/>
            <person name="Thompson L."/>
            <person name="Tielen P."/>
            <person name="Tomasch J."/>
            <person name="von Jan M."/>
            <person name="Wanphrut N."/>
            <person name="Wichels A."/>
            <person name="Zech H."/>
            <person name="Simon M."/>
        </authorList>
    </citation>
    <scope>NUCLEOTIDE SEQUENCE [LARGE SCALE GENOMIC DNA]</scope>
    <source>
        <strain>DSM 16493 / NCIMB 14021 / DFL 12</strain>
    </source>
</reference>
<accession>A8LKC5</accession>
<gene>
    <name evidence="1" type="primary">dut</name>
    <name type="ordered locus">Dshi_2975</name>
</gene>
<protein>
    <recommendedName>
        <fullName evidence="1">Deoxyuridine 5'-triphosphate nucleotidohydrolase</fullName>
        <shortName evidence="1">dUTPase</shortName>
        <ecNumber evidence="1">3.6.1.23</ecNumber>
    </recommendedName>
    <alternativeName>
        <fullName evidence="1">dUTP pyrophosphatase</fullName>
    </alternativeName>
</protein>
<proteinExistence type="inferred from homology"/>
<organism>
    <name type="scientific">Dinoroseobacter shibae (strain DSM 16493 / NCIMB 14021 / DFL 12)</name>
    <dbReference type="NCBI Taxonomy" id="398580"/>
    <lineage>
        <taxon>Bacteria</taxon>
        <taxon>Pseudomonadati</taxon>
        <taxon>Pseudomonadota</taxon>
        <taxon>Alphaproteobacteria</taxon>
        <taxon>Rhodobacterales</taxon>
        <taxon>Roseobacteraceae</taxon>
        <taxon>Dinoroseobacter</taxon>
    </lineage>
</organism>
<evidence type="ECO:0000255" key="1">
    <source>
        <dbReference type="HAMAP-Rule" id="MF_00116"/>
    </source>
</evidence>